<evidence type="ECO:0000255" key="1">
    <source>
        <dbReference type="HAMAP-Rule" id="MF_01874"/>
    </source>
</evidence>
<name>Y2177_HALOH</name>
<proteinExistence type="inferred from homology"/>
<accession>B8D0I7</accession>
<organism>
    <name type="scientific">Halothermothrix orenii (strain H 168 / OCM 544 / DSM 9562)</name>
    <dbReference type="NCBI Taxonomy" id="373903"/>
    <lineage>
        <taxon>Bacteria</taxon>
        <taxon>Bacillati</taxon>
        <taxon>Bacillota</taxon>
        <taxon>Clostridia</taxon>
        <taxon>Halanaerobiales</taxon>
        <taxon>Halothermotrichaceae</taxon>
        <taxon>Halothermothrix</taxon>
    </lineage>
</organism>
<keyword id="KW-1003">Cell membrane</keyword>
<keyword id="KW-0472">Membrane</keyword>
<keyword id="KW-1185">Reference proteome</keyword>
<keyword id="KW-0812">Transmembrane</keyword>
<keyword id="KW-1133">Transmembrane helix</keyword>
<sequence length="151" mass="16213">MNIKYFLLIITILGFLARSRVLVIAGLLLLTIYEFEIDFVFEFLGNKGIEIGLIFLLMAILSSLVLSPVDGEVIKDNLLSWQGTVAIIAGVLATKFNGMGLDLLQESPQFILGIIMGSLVGIVFFGGIPVGPLMAAGIGAVLFKIIEIIKG</sequence>
<reference key="1">
    <citation type="journal article" date="2009" name="PLoS ONE">
        <title>Genome analysis of the anaerobic thermohalophilic bacterium Halothermothrix orenii.</title>
        <authorList>
            <person name="Mavromatis K."/>
            <person name="Ivanova N."/>
            <person name="Anderson I."/>
            <person name="Lykidis A."/>
            <person name="Hooper S.D."/>
            <person name="Sun H."/>
            <person name="Kunin V."/>
            <person name="Lapidus A."/>
            <person name="Hugenholtz P."/>
            <person name="Patel B."/>
            <person name="Kyrpides N.C."/>
        </authorList>
    </citation>
    <scope>NUCLEOTIDE SEQUENCE [LARGE SCALE GENOMIC DNA]</scope>
    <source>
        <strain>H 168 / OCM 544 / DSM 9562</strain>
    </source>
</reference>
<protein>
    <recommendedName>
        <fullName evidence="1">UPF0756 membrane protein Hore_21770</fullName>
    </recommendedName>
</protein>
<comment type="subcellular location">
    <subcellularLocation>
        <location evidence="1">Cell membrane</location>
        <topology evidence="1">Multi-pass membrane protein</topology>
    </subcellularLocation>
</comment>
<comment type="similarity">
    <text evidence="1">Belongs to the UPF0756 family.</text>
</comment>
<feature type="chain" id="PRO_0000388886" description="UPF0756 membrane protein Hore_21770">
    <location>
        <begin position="1"/>
        <end position="151"/>
    </location>
</feature>
<feature type="transmembrane region" description="Helical" evidence="1">
    <location>
        <begin position="7"/>
        <end position="29"/>
    </location>
</feature>
<feature type="transmembrane region" description="Helical" evidence="1">
    <location>
        <begin position="49"/>
        <end position="69"/>
    </location>
</feature>
<feature type="transmembrane region" description="Helical" evidence="1">
    <location>
        <begin position="84"/>
        <end position="104"/>
    </location>
</feature>
<feature type="transmembrane region" description="Helical" evidence="1">
    <location>
        <begin position="110"/>
        <end position="130"/>
    </location>
</feature>
<feature type="transmembrane region" description="Helical" evidence="1">
    <location>
        <begin position="131"/>
        <end position="151"/>
    </location>
</feature>
<gene>
    <name type="ordered locus">Hore_21770</name>
</gene>
<dbReference type="EMBL" id="CP001098">
    <property type="protein sequence ID" value="ACL70923.1"/>
    <property type="molecule type" value="Genomic_DNA"/>
</dbReference>
<dbReference type="RefSeq" id="WP_015923892.1">
    <property type="nucleotide sequence ID" value="NC_011899.1"/>
</dbReference>
<dbReference type="STRING" id="373903.Hore_21770"/>
<dbReference type="KEGG" id="hor:Hore_21770"/>
<dbReference type="eggNOG" id="COG2707">
    <property type="taxonomic scope" value="Bacteria"/>
</dbReference>
<dbReference type="HOGENOM" id="CLU_125889_1_0_9"/>
<dbReference type="Proteomes" id="UP000000719">
    <property type="component" value="Chromosome"/>
</dbReference>
<dbReference type="GO" id="GO:0005886">
    <property type="term" value="C:plasma membrane"/>
    <property type="evidence" value="ECO:0007669"/>
    <property type="project" value="UniProtKB-SubCell"/>
</dbReference>
<dbReference type="HAMAP" id="MF_01874">
    <property type="entry name" value="UPF0756"/>
    <property type="match status" value="1"/>
</dbReference>
<dbReference type="InterPro" id="IPR007382">
    <property type="entry name" value="UPF0756_TM"/>
</dbReference>
<dbReference type="PANTHER" id="PTHR38452">
    <property type="entry name" value="UPF0756 MEMBRANE PROTEIN YEAL"/>
    <property type="match status" value="1"/>
</dbReference>
<dbReference type="PANTHER" id="PTHR38452:SF1">
    <property type="entry name" value="UPF0756 MEMBRANE PROTEIN YEAL"/>
    <property type="match status" value="1"/>
</dbReference>
<dbReference type="Pfam" id="PF04284">
    <property type="entry name" value="DUF441"/>
    <property type="match status" value="1"/>
</dbReference>